<protein>
    <recommendedName>
        <fullName>EF-hand calcium-binding domain-containing protein 14</fullName>
    </recommendedName>
</protein>
<sequence length="484" mass="53694">MKKRKELNALIGLAGDHRRKKTKQGSGSHRLLRTEPPDSDSESSTDEEEFGAIGNRSRFVKGDYARCCKICCPLCAFVILAACVVASVGLVWMQMALKEDLDVLKEKFRTMESNQKSSFQEIPKLNEELLSKQKQLEKIESGELGLSRVWINITEMNKQISLLSSAVNHLKASVKSAADLLSLPSTVEGLQKSVASIGNTLNSVHLAVEVIQKTVDEHRTTLGLLQGSMENNGSNQILPSPSPPSELDNKSHSESAKQDILYLHNSLEEVNSTVVEYQRQNDLKLKGMSETLSNLTQRLSLIESHVVALSKAEQRTNVSSSTMENRAATLKRESLVTNRSDTVQAQSMKKEDNSNSQVSELREKLQLISALTNKPESNRPPETTDEEQVQNFTSDPSALPEFSQLLRNQIETQVKPLSLPGISSIKDLQDLFHKTGQDVDGMLTYQELWNSLGSAMPRPESLRAFDSNGDGRYSFLELRLALGI</sequence>
<evidence type="ECO:0000255" key="1"/>
<evidence type="ECO:0000256" key="2">
    <source>
        <dbReference type="SAM" id="MobiDB-lite"/>
    </source>
</evidence>
<evidence type="ECO:0000305" key="3"/>
<proteinExistence type="evidence at transcript level"/>
<organism>
    <name type="scientific">Mus musculus</name>
    <name type="common">Mouse</name>
    <dbReference type="NCBI Taxonomy" id="10090"/>
    <lineage>
        <taxon>Eukaryota</taxon>
        <taxon>Metazoa</taxon>
        <taxon>Chordata</taxon>
        <taxon>Craniata</taxon>
        <taxon>Vertebrata</taxon>
        <taxon>Euteleostomi</taxon>
        <taxon>Mammalia</taxon>
        <taxon>Eutheria</taxon>
        <taxon>Euarchontoglires</taxon>
        <taxon>Glires</taxon>
        <taxon>Rodentia</taxon>
        <taxon>Myomorpha</taxon>
        <taxon>Muroidea</taxon>
        <taxon>Muridae</taxon>
        <taxon>Murinae</taxon>
        <taxon>Mus</taxon>
        <taxon>Mus</taxon>
    </lineage>
</organism>
<reference key="1">
    <citation type="journal article" date="2005" name="Science">
        <title>The transcriptional landscape of the mammalian genome.</title>
        <authorList>
            <person name="Carninci P."/>
            <person name="Kasukawa T."/>
            <person name="Katayama S."/>
            <person name="Gough J."/>
            <person name="Frith M.C."/>
            <person name="Maeda N."/>
            <person name="Oyama R."/>
            <person name="Ravasi T."/>
            <person name="Lenhard B."/>
            <person name="Wells C."/>
            <person name="Kodzius R."/>
            <person name="Shimokawa K."/>
            <person name="Bajic V.B."/>
            <person name="Brenner S.E."/>
            <person name="Batalov S."/>
            <person name="Forrest A.R."/>
            <person name="Zavolan M."/>
            <person name="Davis M.J."/>
            <person name="Wilming L.G."/>
            <person name="Aidinis V."/>
            <person name="Allen J.E."/>
            <person name="Ambesi-Impiombato A."/>
            <person name="Apweiler R."/>
            <person name="Aturaliya R.N."/>
            <person name="Bailey T.L."/>
            <person name="Bansal M."/>
            <person name="Baxter L."/>
            <person name="Beisel K.W."/>
            <person name="Bersano T."/>
            <person name="Bono H."/>
            <person name="Chalk A.M."/>
            <person name="Chiu K.P."/>
            <person name="Choudhary V."/>
            <person name="Christoffels A."/>
            <person name="Clutterbuck D.R."/>
            <person name="Crowe M.L."/>
            <person name="Dalla E."/>
            <person name="Dalrymple B.P."/>
            <person name="de Bono B."/>
            <person name="Della Gatta G."/>
            <person name="di Bernardo D."/>
            <person name="Down T."/>
            <person name="Engstrom P."/>
            <person name="Fagiolini M."/>
            <person name="Faulkner G."/>
            <person name="Fletcher C.F."/>
            <person name="Fukushima T."/>
            <person name="Furuno M."/>
            <person name="Futaki S."/>
            <person name="Gariboldi M."/>
            <person name="Georgii-Hemming P."/>
            <person name="Gingeras T.R."/>
            <person name="Gojobori T."/>
            <person name="Green R.E."/>
            <person name="Gustincich S."/>
            <person name="Harbers M."/>
            <person name="Hayashi Y."/>
            <person name="Hensch T.K."/>
            <person name="Hirokawa N."/>
            <person name="Hill D."/>
            <person name="Huminiecki L."/>
            <person name="Iacono M."/>
            <person name="Ikeo K."/>
            <person name="Iwama A."/>
            <person name="Ishikawa T."/>
            <person name="Jakt M."/>
            <person name="Kanapin A."/>
            <person name="Katoh M."/>
            <person name="Kawasawa Y."/>
            <person name="Kelso J."/>
            <person name="Kitamura H."/>
            <person name="Kitano H."/>
            <person name="Kollias G."/>
            <person name="Krishnan S.P."/>
            <person name="Kruger A."/>
            <person name="Kummerfeld S.K."/>
            <person name="Kurochkin I.V."/>
            <person name="Lareau L.F."/>
            <person name="Lazarevic D."/>
            <person name="Lipovich L."/>
            <person name="Liu J."/>
            <person name="Liuni S."/>
            <person name="McWilliam S."/>
            <person name="Madan Babu M."/>
            <person name="Madera M."/>
            <person name="Marchionni L."/>
            <person name="Matsuda H."/>
            <person name="Matsuzawa S."/>
            <person name="Miki H."/>
            <person name="Mignone F."/>
            <person name="Miyake S."/>
            <person name="Morris K."/>
            <person name="Mottagui-Tabar S."/>
            <person name="Mulder N."/>
            <person name="Nakano N."/>
            <person name="Nakauchi H."/>
            <person name="Ng P."/>
            <person name="Nilsson R."/>
            <person name="Nishiguchi S."/>
            <person name="Nishikawa S."/>
            <person name="Nori F."/>
            <person name="Ohara O."/>
            <person name="Okazaki Y."/>
            <person name="Orlando V."/>
            <person name="Pang K.C."/>
            <person name="Pavan W.J."/>
            <person name="Pavesi G."/>
            <person name="Pesole G."/>
            <person name="Petrovsky N."/>
            <person name="Piazza S."/>
            <person name="Reed J."/>
            <person name="Reid J.F."/>
            <person name="Ring B.Z."/>
            <person name="Ringwald M."/>
            <person name="Rost B."/>
            <person name="Ruan Y."/>
            <person name="Salzberg S.L."/>
            <person name="Sandelin A."/>
            <person name="Schneider C."/>
            <person name="Schoenbach C."/>
            <person name="Sekiguchi K."/>
            <person name="Semple C.A."/>
            <person name="Seno S."/>
            <person name="Sessa L."/>
            <person name="Sheng Y."/>
            <person name="Shibata Y."/>
            <person name="Shimada H."/>
            <person name="Shimada K."/>
            <person name="Silva D."/>
            <person name="Sinclair B."/>
            <person name="Sperling S."/>
            <person name="Stupka E."/>
            <person name="Sugiura K."/>
            <person name="Sultana R."/>
            <person name="Takenaka Y."/>
            <person name="Taki K."/>
            <person name="Tammoja K."/>
            <person name="Tan S.L."/>
            <person name="Tang S."/>
            <person name="Taylor M.S."/>
            <person name="Tegner J."/>
            <person name="Teichmann S.A."/>
            <person name="Ueda H.R."/>
            <person name="van Nimwegen E."/>
            <person name="Verardo R."/>
            <person name="Wei C.L."/>
            <person name="Yagi K."/>
            <person name="Yamanishi H."/>
            <person name="Zabarovsky E."/>
            <person name="Zhu S."/>
            <person name="Zimmer A."/>
            <person name="Hide W."/>
            <person name="Bult C."/>
            <person name="Grimmond S.M."/>
            <person name="Teasdale R.D."/>
            <person name="Liu E.T."/>
            <person name="Brusic V."/>
            <person name="Quackenbush J."/>
            <person name="Wahlestedt C."/>
            <person name="Mattick J.S."/>
            <person name="Hume D.A."/>
            <person name="Kai C."/>
            <person name="Sasaki D."/>
            <person name="Tomaru Y."/>
            <person name="Fukuda S."/>
            <person name="Kanamori-Katayama M."/>
            <person name="Suzuki M."/>
            <person name="Aoki J."/>
            <person name="Arakawa T."/>
            <person name="Iida J."/>
            <person name="Imamura K."/>
            <person name="Itoh M."/>
            <person name="Kato T."/>
            <person name="Kawaji H."/>
            <person name="Kawagashira N."/>
            <person name="Kawashima T."/>
            <person name="Kojima M."/>
            <person name="Kondo S."/>
            <person name="Konno H."/>
            <person name="Nakano K."/>
            <person name="Ninomiya N."/>
            <person name="Nishio T."/>
            <person name="Okada M."/>
            <person name="Plessy C."/>
            <person name="Shibata K."/>
            <person name="Shiraki T."/>
            <person name="Suzuki S."/>
            <person name="Tagami M."/>
            <person name="Waki K."/>
            <person name="Watahiki A."/>
            <person name="Okamura-Oho Y."/>
            <person name="Suzuki H."/>
            <person name="Kawai J."/>
            <person name="Hayashizaki Y."/>
        </authorList>
    </citation>
    <scope>NUCLEOTIDE SEQUENCE [LARGE SCALE MRNA]</scope>
    <source>
        <strain>C57BL/6J</strain>
        <tissue>Brain cortex</tissue>
        <tissue>Corpora quadrigemina</tissue>
        <tissue>Eye</tissue>
        <tissue>Skin</tissue>
        <tissue>Testis</tissue>
    </source>
</reference>
<reference key="2">
    <citation type="journal article" date="2009" name="PLoS Biol.">
        <title>Lineage-specific biology revealed by a finished genome assembly of the mouse.</title>
        <authorList>
            <person name="Church D.M."/>
            <person name="Goodstadt L."/>
            <person name="Hillier L.W."/>
            <person name="Zody M.C."/>
            <person name="Goldstein S."/>
            <person name="She X."/>
            <person name="Bult C.J."/>
            <person name="Agarwala R."/>
            <person name="Cherry J.L."/>
            <person name="DiCuccio M."/>
            <person name="Hlavina W."/>
            <person name="Kapustin Y."/>
            <person name="Meric P."/>
            <person name="Maglott D."/>
            <person name="Birtle Z."/>
            <person name="Marques A.C."/>
            <person name="Graves T."/>
            <person name="Zhou S."/>
            <person name="Teague B."/>
            <person name="Potamousis K."/>
            <person name="Churas C."/>
            <person name="Place M."/>
            <person name="Herschleb J."/>
            <person name="Runnheim R."/>
            <person name="Forrest D."/>
            <person name="Amos-Landgraf J."/>
            <person name="Schwartz D.C."/>
            <person name="Cheng Z."/>
            <person name="Lindblad-Toh K."/>
            <person name="Eichler E.E."/>
            <person name="Ponting C.P."/>
        </authorList>
    </citation>
    <scope>NUCLEOTIDE SEQUENCE [LARGE SCALE GENOMIC DNA]</scope>
    <source>
        <strain>C57BL/6J</strain>
    </source>
</reference>
<name>EFC14_MOUSE</name>
<keyword id="KW-0025">Alternative splicing</keyword>
<keyword id="KW-0106">Calcium</keyword>
<keyword id="KW-0479">Metal-binding</keyword>
<keyword id="KW-1185">Reference proteome</keyword>
<keyword id="KW-0677">Repeat</keyword>
<gene>
    <name type="primary">Efcab14</name>
    <name type="synonym">Kiaa0494</name>
</gene>
<dbReference type="EMBL" id="AK028618">
    <property type="protein sequence ID" value="BAC26034.1"/>
    <property type="molecule type" value="mRNA"/>
</dbReference>
<dbReference type="EMBL" id="AK030011">
    <property type="protein sequence ID" value="BAC26732.1"/>
    <property type="molecule type" value="mRNA"/>
</dbReference>
<dbReference type="EMBL" id="AK078691">
    <property type="protein sequence ID" value="BAC37361.1"/>
    <property type="molecule type" value="mRNA"/>
</dbReference>
<dbReference type="EMBL" id="AK080626">
    <property type="protein sequence ID" value="BAC37965.1"/>
    <property type="molecule type" value="mRNA"/>
</dbReference>
<dbReference type="EMBL" id="AK163435">
    <property type="protein sequence ID" value="BAE37346.1"/>
    <property type="molecule type" value="mRNA"/>
</dbReference>
<dbReference type="EMBL" id="AL626806">
    <property type="status" value="NOT_ANNOTATED_CDS"/>
    <property type="molecule type" value="Genomic_DNA"/>
</dbReference>
<dbReference type="CCDS" id="CCDS89810.1">
    <molecule id="Q8BGQ6-1"/>
</dbReference>
<dbReference type="RefSeq" id="NP_001355556.1">
    <molecule id="Q8BGQ6-1"/>
    <property type="nucleotide sequence ID" value="NM_001368627.1"/>
</dbReference>
<dbReference type="RefSeq" id="XP_006503069.1">
    <molecule id="Q8BGQ6-1"/>
    <property type="nucleotide sequence ID" value="XM_006503006.5"/>
</dbReference>
<dbReference type="SMR" id="Q8BGQ6"/>
<dbReference type="BioGRID" id="230992">
    <property type="interactions" value="2"/>
</dbReference>
<dbReference type="FunCoup" id="Q8BGQ6">
    <property type="interactions" value="377"/>
</dbReference>
<dbReference type="STRING" id="10090.ENSMUSP00000074025"/>
<dbReference type="GlyConnect" id="2278">
    <property type="glycosylation" value="1 N-Linked glycan (1 site)"/>
</dbReference>
<dbReference type="GlyCosmos" id="Q8BGQ6">
    <property type="glycosylation" value="1 site, 1 glycan"/>
</dbReference>
<dbReference type="GlyGen" id="Q8BGQ6">
    <property type="glycosylation" value="7 sites, 8 N-linked glycans (7 sites)"/>
</dbReference>
<dbReference type="iPTMnet" id="Q8BGQ6"/>
<dbReference type="PhosphoSitePlus" id="Q8BGQ6"/>
<dbReference type="SwissPalm" id="Q8BGQ6"/>
<dbReference type="PaxDb" id="10090-ENSMUSP00000074025"/>
<dbReference type="PeptideAtlas" id="Q8BGQ6"/>
<dbReference type="ProteomicsDB" id="277443">
    <molecule id="Q8BGQ6-1"/>
</dbReference>
<dbReference type="ProteomicsDB" id="277444">
    <molecule id="Q8BGQ6-2"/>
</dbReference>
<dbReference type="Pumba" id="Q8BGQ6"/>
<dbReference type="Antibodypedia" id="2537">
    <property type="antibodies" value="96 antibodies from 22 providers"/>
</dbReference>
<dbReference type="Ensembl" id="ENSMUST00000106522.9">
    <molecule id="Q8BGQ6-2"/>
    <property type="protein sequence ID" value="ENSMUSP00000102132.3"/>
    <property type="gene ID" value="ENSMUSG00000034210.15"/>
</dbReference>
<dbReference type="Ensembl" id="ENSMUST00000106525.9">
    <molecule id="Q8BGQ6-1"/>
    <property type="protein sequence ID" value="ENSMUSP00000102135.3"/>
    <property type="gene ID" value="ENSMUSG00000034210.15"/>
</dbReference>
<dbReference type="GeneID" id="230648"/>
<dbReference type="UCSC" id="uc008uff.1">
    <molecule id="Q8BGQ6-1"/>
    <property type="organism name" value="mouse"/>
</dbReference>
<dbReference type="AGR" id="MGI:2442397"/>
<dbReference type="CTD" id="9813"/>
<dbReference type="MGI" id="MGI:2442397">
    <property type="gene designation" value="Efcab14"/>
</dbReference>
<dbReference type="VEuPathDB" id="HostDB:ENSMUSG00000034210"/>
<dbReference type="eggNOG" id="ENOG502QSQB">
    <property type="taxonomic scope" value="Eukaryota"/>
</dbReference>
<dbReference type="GeneTree" id="ENSGT00390000011196"/>
<dbReference type="InParanoid" id="Q8BGQ6"/>
<dbReference type="OrthoDB" id="10009315at2759"/>
<dbReference type="BioGRID-ORCS" id="230648">
    <property type="hits" value="2 hits in 78 CRISPR screens"/>
</dbReference>
<dbReference type="ChiTaRS" id="Efcab14">
    <property type="organism name" value="mouse"/>
</dbReference>
<dbReference type="PRO" id="PR:Q8BGQ6"/>
<dbReference type="Proteomes" id="UP000000589">
    <property type="component" value="Chromosome 4"/>
</dbReference>
<dbReference type="RNAct" id="Q8BGQ6">
    <property type="molecule type" value="protein"/>
</dbReference>
<dbReference type="Bgee" id="ENSMUSG00000034210">
    <property type="expression patterns" value="Expressed in animal zygote and 237 other cell types or tissues"/>
</dbReference>
<dbReference type="ExpressionAtlas" id="Q8BGQ6">
    <property type="expression patterns" value="baseline and differential"/>
</dbReference>
<dbReference type="GO" id="GO:0046872">
    <property type="term" value="F:metal ion binding"/>
    <property type="evidence" value="ECO:0007669"/>
    <property type="project" value="UniProtKB-KW"/>
</dbReference>
<dbReference type="InterPro" id="IPR011992">
    <property type="entry name" value="EF-hand-dom_pair"/>
</dbReference>
<dbReference type="InterPro" id="IPR042352">
    <property type="entry name" value="EFCAB14"/>
</dbReference>
<dbReference type="PANTHER" id="PTHR15717:SF2">
    <property type="entry name" value="EF-HAND CALCIUM-BINDING DOMAIN-CONTAINING PROTEIN 14"/>
    <property type="match status" value="1"/>
</dbReference>
<dbReference type="PANTHER" id="PTHR15717">
    <property type="entry name" value="PROTEIN KIAA0494"/>
    <property type="match status" value="1"/>
</dbReference>
<dbReference type="SUPFAM" id="SSF47473">
    <property type="entry name" value="EF-hand"/>
    <property type="match status" value="1"/>
</dbReference>
<feature type="chain" id="PRO_0000073883" description="EF-hand calcium-binding domain-containing protein 14">
    <location>
        <begin position="1"/>
        <end position="484"/>
    </location>
</feature>
<feature type="domain" description="EF-hand 1">
    <location>
        <begin position="423"/>
        <end position="452"/>
    </location>
</feature>
<feature type="domain" description="EF-hand 2">
    <location>
        <begin position="453"/>
        <end position="484"/>
    </location>
</feature>
<feature type="region of interest" description="Disordered" evidence="2">
    <location>
        <begin position="1"/>
        <end position="48"/>
    </location>
</feature>
<feature type="region of interest" description="Disordered" evidence="2">
    <location>
        <begin position="227"/>
        <end position="255"/>
    </location>
</feature>
<feature type="region of interest" description="Disordered" evidence="2">
    <location>
        <begin position="313"/>
        <end position="395"/>
    </location>
</feature>
<feature type="compositionally biased region" description="Acidic residues" evidence="2">
    <location>
        <begin position="37"/>
        <end position="48"/>
    </location>
</feature>
<feature type="compositionally biased region" description="Polar residues" evidence="2">
    <location>
        <begin position="228"/>
        <end position="239"/>
    </location>
</feature>
<feature type="compositionally biased region" description="Polar residues" evidence="2">
    <location>
        <begin position="315"/>
        <end position="324"/>
    </location>
</feature>
<feature type="compositionally biased region" description="Polar residues" evidence="2">
    <location>
        <begin position="335"/>
        <end position="347"/>
    </location>
</feature>
<feature type="binding site" evidence="1">
    <location>
        <position position="466"/>
    </location>
    <ligand>
        <name>Ca(2+)</name>
        <dbReference type="ChEBI" id="CHEBI:29108"/>
    </ligand>
</feature>
<feature type="binding site" evidence="1">
    <location>
        <position position="468"/>
    </location>
    <ligand>
        <name>Ca(2+)</name>
        <dbReference type="ChEBI" id="CHEBI:29108"/>
    </ligand>
</feature>
<feature type="binding site" evidence="1">
    <location>
        <position position="470"/>
    </location>
    <ligand>
        <name>Ca(2+)</name>
        <dbReference type="ChEBI" id="CHEBI:29108"/>
    </ligand>
</feature>
<feature type="binding site" evidence="1">
    <location>
        <position position="472"/>
    </location>
    <ligand>
        <name>Ca(2+)</name>
        <dbReference type="ChEBI" id="CHEBI:29108"/>
    </ligand>
</feature>
<feature type="binding site" evidence="1">
    <location>
        <position position="477"/>
    </location>
    <ligand>
        <name>Ca(2+)</name>
        <dbReference type="ChEBI" id="CHEBI:29108"/>
    </ligand>
</feature>
<feature type="splice variant" id="VSP_008512" description="In isoform 2." evidence="3">
    <original>DLQDLFHKTGQDVDGMLTYQELWNSLGSAMPRPESLRAFDSNGDGRYSFLELRLALGI</original>
    <variation>GQKHQILLELELELQAVVNYLTRTLGTELWSAGGGVQTPDH</variation>
    <location>
        <begin position="427"/>
        <end position="484"/>
    </location>
</feature>
<feature type="sequence conflict" description="In Ref. 1; BAC37361." evidence="3" ref="1">
    <original>H</original>
    <variation>R</variation>
    <location>
        <position position="29"/>
    </location>
</feature>
<feature type="sequence conflict" description="In Ref. 1; BAC26732." evidence="3" ref="1">
    <original>V</original>
    <variation>A</variation>
    <location>
        <position position="174"/>
    </location>
</feature>
<comment type="alternative products">
    <event type="alternative splicing"/>
    <isoform>
        <id>Q8BGQ6-1</id>
        <name>1</name>
        <sequence type="displayed"/>
    </isoform>
    <isoform>
        <id>Q8BGQ6-2</id>
        <name>2</name>
        <sequence type="described" ref="VSP_008512"/>
    </isoform>
</comment>
<accession>Q8BGQ6</accession>
<accession>A2A8U1</accession>
<accession>Q3TQN6</accession>
<accession>Q8BJV7</accession>
<accession>Q8C0R1</accession>